<feature type="chain" id="PRO_0000299885" description="Uncharacterized protein YDR344C">
    <location>
        <begin position="1"/>
        <end position="147"/>
    </location>
</feature>
<reference key="1">
    <citation type="journal article" date="1997" name="Nature">
        <title>The nucleotide sequence of Saccharomyces cerevisiae chromosome IV.</title>
        <authorList>
            <person name="Jacq C."/>
            <person name="Alt-Moerbe J."/>
            <person name="Andre B."/>
            <person name="Arnold W."/>
            <person name="Bahr A."/>
            <person name="Ballesta J.P.G."/>
            <person name="Bargues M."/>
            <person name="Baron L."/>
            <person name="Becker A."/>
            <person name="Biteau N."/>
            <person name="Bloecker H."/>
            <person name="Blugeon C."/>
            <person name="Boskovic J."/>
            <person name="Brandt P."/>
            <person name="Brueckner M."/>
            <person name="Buitrago M.J."/>
            <person name="Coster F."/>
            <person name="Delaveau T."/>
            <person name="del Rey F."/>
            <person name="Dujon B."/>
            <person name="Eide L.G."/>
            <person name="Garcia-Cantalejo J.M."/>
            <person name="Goffeau A."/>
            <person name="Gomez-Peris A."/>
            <person name="Granotier C."/>
            <person name="Hanemann V."/>
            <person name="Hankeln T."/>
            <person name="Hoheisel J.D."/>
            <person name="Jaeger W."/>
            <person name="Jimenez A."/>
            <person name="Jonniaux J.-L."/>
            <person name="Kraemer C."/>
            <person name="Kuester H."/>
            <person name="Laamanen P."/>
            <person name="Legros Y."/>
            <person name="Louis E.J."/>
            <person name="Moeller-Rieker S."/>
            <person name="Monnet A."/>
            <person name="Moro M."/>
            <person name="Mueller-Auer S."/>
            <person name="Nussbaumer B."/>
            <person name="Paricio N."/>
            <person name="Paulin L."/>
            <person name="Perea J."/>
            <person name="Perez-Alonso M."/>
            <person name="Perez-Ortin J.E."/>
            <person name="Pohl T.M."/>
            <person name="Prydz H."/>
            <person name="Purnelle B."/>
            <person name="Rasmussen S.W."/>
            <person name="Remacha M.A."/>
            <person name="Revuelta J.L."/>
            <person name="Rieger M."/>
            <person name="Salom D."/>
            <person name="Saluz H.P."/>
            <person name="Saiz J.E."/>
            <person name="Saren A.-M."/>
            <person name="Schaefer M."/>
            <person name="Scharfe M."/>
            <person name="Schmidt E.R."/>
            <person name="Schneider C."/>
            <person name="Scholler P."/>
            <person name="Schwarz S."/>
            <person name="Soler-Mira A."/>
            <person name="Urrestarazu L.A."/>
            <person name="Verhasselt P."/>
            <person name="Vissers S."/>
            <person name="Voet M."/>
            <person name="Volckaert G."/>
            <person name="Wagner G."/>
            <person name="Wambutt R."/>
            <person name="Wedler E."/>
            <person name="Wedler H."/>
            <person name="Woelfl S."/>
            <person name="Harris D.E."/>
            <person name="Bowman S."/>
            <person name="Brown D."/>
            <person name="Churcher C.M."/>
            <person name="Connor R."/>
            <person name="Dedman K."/>
            <person name="Gentles S."/>
            <person name="Hamlin N."/>
            <person name="Hunt S."/>
            <person name="Jones L."/>
            <person name="McDonald S."/>
            <person name="Murphy L.D."/>
            <person name="Niblett D."/>
            <person name="Odell C."/>
            <person name="Oliver K."/>
            <person name="Rajandream M.A."/>
            <person name="Richards C."/>
            <person name="Shore L."/>
            <person name="Walsh S.V."/>
            <person name="Barrell B.G."/>
            <person name="Dietrich F.S."/>
            <person name="Mulligan J.T."/>
            <person name="Allen E."/>
            <person name="Araujo R."/>
            <person name="Aviles E."/>
            <person name="Berno A."/>
            <person name="Carpenter J."/>
            <person name="Chen E."/>
            <person name="Cherry J.M."/>
            <person name="Chung E."/>
            <person name="Duncan M."/>
            <person name="Hunicke-Smith S."/>
            <person name="Hyman R.W."/>
            <person name="Komp C."/>
            <person name="Lashkari D."/>
            <person name="Lew H."/>
            <person name="Lin D."/>
            <person name="Mosedale D."/>
            <person name="Nakahara K."/>
            <person name="Namath A."/>
            <person name="Oefner P."/>
            <person name="Oh C."/>
            <person name="Petel F.X."/>
            <person name="Roberts D."/>
            <person name="Schramm S."/>
            <person name="Schroeder M."/>
            <person name="Shogren T."/>
            <person name="Shroff N."/>
            <person name="Winant A."/>
            <person name="Yelton M.A."/>
            <person name="Botstein D."/>
            <person name="Davis R.W."/>
            <person name="Johnston M."/>
            <person name="Andrews S."/>
            <person name="Brinkman R."/>
            <person name="Cooper J."/>
            <person name="Ding H."/>
            <person name="Du Z."/>
            <person name="Favello A."/>
            <person name="Fulton L."/>
            <person name="Gattung S."/>
            <person name="Greco T."/>
            <person name="Hallsworth K."/>
            <person name="Hawkins J."/>
            <person name="Hillier L.W."/>
            <person name="Jier M."/>
            <person name="Johnson D."/>
            <person name="Johnston L."/>
            <person name="Kirsten J."/>
            <person name="Kucaba T."/>
            <person name="Langston Y."/>
            <person name="Latreille P."/>
            <person name="Le T."/>
            <person name="Mardis E."/>
            <person name="Menezes S."/>
            <person name="Miller N."/>
            <person name="Nhan M."/>
            <person name="Pauley A."/>
            <person name="Peluso D."/>
            <person name="Rifkin L."/>
            <person name="Riles L."/>
            <person name="Taich A."/>
            <person name="Trevaskis E."/>
            <person name="Vignati D."/>
            <person name="Wilcox L."/>
            <person name="Wohldman P."/>
            <person name="Vaudin M."/>
            <person name="Wilson R."/>
            <person name="Waterston R."/>
            <person name="Albermann K."/>
            <person name="Hani J."/>
            <person name="Heumann K."/>
            <person name="Kleine K."/>
            <person name="Mewes H.-W."/>
            <person name="Zollner A."/>
            <person name="Zaccaria P."/>
        </authorList>
    </citation>
    <scope>NUCLEOTIDE SEQUENCE [LARGE SCALE GENOMIC DNA]</scope>
    <source>
        <strain>ATCC 204508 / S288c</strain>
    </source>
</reference>
<reference key="2">
    <citation type="journal article" date="2014" name="G3 (Bethesda)">
        <title>The reference genome sequence of Saccharomyces cerevisiae: Then and now.</title>
        <authorList>
            <person name="Engel S.R."/>
            <person name="Dietrich F.S."/>
            <person name="Fisk D.G."/>
            <person name="Binkley G."/>
            <person name="Balakrishnan R."/>
            <person name="Costanzo M.C."/>
            <person name="Dwight S.S."/>
            <person name="Hitz B.C."/>
            <person name="Karra K."/>
            <person name="Nash R.S."/>
            <person name="Weng S."/>
            <person name="Wong E.D."/>
            <person name="Lloyd P."/>
            <person name="Skrzypek M.S."/>
            <person name="Miyasato S.R."/>
            <person name="Simison M."/>
            <person name="Cherry J.M."/>
        </authorList>
    </citation>
    <scope>GENOME REANNOTATION</scope>
    <source>
        <strain>ATCC 204508 / S288c</strain>
    </source>
</reference>
<sequence length="147" mass="17500">MAFLSWTFFPSFFHFLERNRFFLTFATQLHYLNPFYILSFRVEWHQIWENLAYSDTNTFFHEYCWKIFPCLSAGIRNNGCCDAAKGQGKNKQHTPKQEEEIPNTSLRRHRSCCNMFTCSSPCYYLEINVGVIGVRRPVLSEEQRKNC</sequence>
<keyword id="KW-1185">Reference proteome</keyword>
<accession>Q05510</accession>
<accession>A0A1S0T062</accession>
<proteinExistence type="predicted"/>
<organism>
    <name type="scientific">Saccharomyces cerevisiae (strain ATCC 204508 / S288c)</name>
    <name type="common">Baker's yeast</name>
    <dbReference type="NCBI Taxonomy" id="559292"/>
    <lineage>
        <taxon>Eukaryota</taxon>
        <taxon>Fungi</taxon>
        <taxon>Dikarya</taxon>
        <taxon>Ascomycota</taxon>
        <taxon>Saccharomycotina</taxon>
        <taxon>Saccharomycetes</taxon>
        <taxon>Saccharomycetales</taxon>
        <taxon>Saccharomycetaceae</taxon>
        <taxon>Saccharomyces</taxon>
    </lineage>
</organism>
<name>YD344_YEAST</name>
<dbReference type="EMBL" id="U51032">
    <property type="protein sequence ID" value="AAB64780.1"/>
    <property type="molecule type" value="Genomic_DNA"/>
</dbReference>
<dbReference type="EMBL" id="BK006938">
    <property type="protein sequence ID" value="DAA80282.1"/>
    <property type="molecule type" value="Genomic_DNA"/>
</dbReference>
<dbReference type="PIR" id="S70109">
    <property type="entry name" value="S70109"/>
</dbReference>
<dbReference type="RefSeq" id="NP_001335762.1">
    <property type="nucleotide sequence ID" value="NM_001348817.1"/>
</dbReference>
<dbReference type="DIP" id="DIP-4129N"/>
<dbReference type="FunCoup" id="Q05510">
    <property type="interactions" value="26"/>
</dbReference>
<dbReference type="IntAct" id="Q05510">
    <property type="interactions" value="1"/>
</dbReference>
<dbReference type="STRING" id="4932.YDR344C"/>
<dbReference type="PaxDb" id="4932-YDR344C"/>
<dbReference type="EnsemblFungi" id="YDR344C_mRNA">
    <property type="protein sequence ID" value="YDR344C"/>
    <property type="gene ID" value="YDR344C"/>
</dbReference>
<dbReference type="GeneID" id="851945"/>
<dbReference type="AGR" id="SGD:S000002752"/>
<dbReference type="SGD" id="S000002752">
    <property type="gene designation" value="YDR344C"/>
</dbReference>
<dbReference type="HOGENOM" id="CLU_1769529_0_0_1"/>
<dbReference type="InParanoid" id="Q05510"/>
<dbReference type="PRO" id="PR:Q05510"/>
<dbReference type="Proteomes" id="UP000002311">
    <property type="component" value="Chromosome IV"/>
</dbReference>
<dbReference type="RNAct" id="Q05510">
    <property type="molecule type" value="protein"/>
</dbReference>
<protein>
    <recommendedName>
        <fullName>Uncharacterized protein YDR344C</fullName>
    </recommendedName>
</protein>
<gene>
    <name type="ordered locus">YDR344C</name>
</gene>